<reference evidence="6" key="1">
    <citation type="journal article" date="1996" name="Development">
        <title>The neurogenic genes egghead and brainiac define a novel signaling pathway essential for epithelial morphogenesis during Drosophila oogenesis.</title>
        <authorList>
            <person name="Goode S."/>
            <person name="Melnick M."/>
            <person name="Chou T.-B."/>
            <person name="Perrimon N."/>
        </authorList>
    </citation>
    <scope>NUCLEOTIDE SEQUENCE [MRNA]</scope>
    <scope>FUNCTION</scope>
</reference>
<reference evidence="6" key="2">
    <citation type="journal article" date="2000" name="Science">
        <title>The genome sequence of Drosophila melanogaster.</title>
        <authorList>
            <person name="Adams M.D."/>
            <person name="Celniker S.E."/>
            <person name="Holt R.A."/>
            <person name="Evans C.A."/>
            <person name="Gocayne J.D."/>
            <person name="Amanatides P.G."/>
            <person name="Scherer S.E."/>
            <person name="Li P.W."/>
            <person name="Hoskins R.A."/>
            <person name="Galle R.F."/>
            <person name="George R.A."/>
            <person name="Lewis S.E."/>
            <person name="Richards S."/>
            <person name="Ashburner M."/>
            <person name="Henderson S.N."/>
            <person name="Sutton G.G."/>
            <person name="Wortman J.R."/>
            <person name="Yandell M.D."/>
            <person name="Zhang Q."/>
            <person name="Chen L.X."/>
            <person name="Brandon R.C."/>
            <person name="Rogers Y.-H.C."/>
            <person name="Blazej R.G."/>
            <person name="Champe M."/>
            <person name="Pfeiffer B.D."/>
            <person name="Wan K.H."/>
            <person name="Doyle C."/>
            <person name="Baxter E.G."/>
            <person name="Helt G."/>
            <person name="Nelson C.R."/>
            <person name="Miklos G.L.G."/>
            <person name="Abril J.F."/>
            <person name="Agbayani A."/>
            <person name="An H.-J."/>
            <person name="Andrews-Pfannkoch C."/>
            <person name="Baldwin D."/>
            <person name="Ballew R.M."/>
            <person name="Basu A."/>
            <person name="Baxendale J."/>
            <person name="Bayraktaroglu L."/>
            <person name="Beasley E.M."/>
            <person name="Beeson K.Y."/>
            <person name="Benos P.V."/>
            <person name="Berman B.P."/>
            <person name="Bhandari D."/>
            <person name="Bolshakov S."/>
            <person name="Borkova D."/>
            <person name="Botchan M.R."/>
            <person name="Bouck J."/>
            <person name="Brokstein P."/>
            <person name="Brottier P."/>
            <person name="Burtis K.C."/>
            <person name="Busam D.A."/>
            <person name="Butler H."/>
            <person name="Cadieu E."/>
            <person name="Center A."/>
            <person name="Chandra I."/>
            <person name="Cherry J.M."/>
            <person name="Cawley S."/>
            <person name="Dahlke C."/>
            <person name="Davenport L.B."/>
            <person name="Davies P."/>
            <person name="de Pablos B."/>
            <person name="Delcher A."/>
            <person name="Deng Z."/>
            <person name="Mays A.D."/>
            <person name="Dew I."/>
            <person name="Dietz S.M."/>
            <person name="Dodson K."/>
            <person name="Doup L.E."/>
            <person name="Downes M."/>
            <person name="Dugan-Rocha S."/>
            <person name="Dunkov B.C."/>
            <person name="Dunn P."/>
            <person name="Durbin K.J."/>
            <person name="Evangelista C.C."/>
            <person name="Ferraz C."/>
            <person name="Ferriera S."/>
            <person name="Fleischmann W."/>
            <person name="Fosler C."/>
            <person name="Gabrielian A.E."/>
            <person name="Garg N.S."/>
            <person name="Gelbart W.M."/>
            <person name="Glasser K."/>
            <person name="Glodek A."/>
            <person name="Gong F."/>
            <person name="Gorrell J.H."/>
            <person name="Gu Z."/>
            <person name="Guan P."/>
            <person name="Harris M."/>
            <person name="Harris N.L."/>
            <person name="Harvey D.A."/>
            <person name="Heiman T.J."/>
            <person name="Hernandez J.R."/>
            <person name="Houck J."/>
            <person name="Hostin D."/>
            <person name="Houston K.A."/>
            <person name="Howland T.J."/>
            <person name="Wei M.-H."/>
            <person name="Ibegwam C."/>
            <person name="Jalali M."/>
            <person name="Kalush F."/>
            <person name="Karpen G.H."/>
            <person name="Ke Z."/>
            <person name="Kennison J.A."/>
            <person name="Ketchum K.A."/>
            <person name="Kimmel B.E."/>
            <person name="Kodira C.D."/>
            <person name="Kraft C.L."/>
            <person name="Kravitz S."/>
            <person name="Kulp D."/>
            <person name="Lai Z."/>
            <person name="Lasko P."/>
            <person name="Lei Y."/>
            <person name="Levitsky A.A."/>
            <person name="Li J.H."/>
            <person name="Li Z."/>
            <person name="Liang Y."/>
            <person name="Lin X."/>
            <person name="Liu X."/>
            <person name="Mattei B."/>
            <person name="McIntosh T.C."/>
            <person name="McLeod M.P."/>
            <person name="McPherson D."/>
            <person name="Merkulov G."/>
            <person name="Milshina N.V."/>
            <person name="Mobarry C."/>
            <person name="Morris J."/>
            <person name="Moshrefi A."/>
            <person name="Mount S.M."/>
            <person name="Moy M."/>
            <person name="Murphy B."/>
            <person name="Murphy L."/>
            <person name="Muzny D.M."/>
            <person name="Nelson D.L."/>
            <person name="Nelson D.R."/>
            <person name="Nelson K.A."/>
            <person name="Nixon K."/>
            <person name="Nusskern D.R."/>
            <person name="Pacleb J.M."/>
            <person name="Palazzolo M."/>
            <person name="Pittman G.S."/>
            <person name="Pan S."/>
            <person name="Pollard J."/>
            <person name="Puri V."/>
            <person name="Reese M.G."/>
            <person name="Reinert K."/>
            <person name="Remington K."/>
            <person name="Saunders R.D.C."/>
            <person name="Scheeler F."/>
            <person name="Shen H."/>
            <person name="Shue B.C."/>
            <person name="Siden-Kiamos I."/>
            <person name="Simpson M."/>
            <person name="Skupski M.P."/>
            <person name="Smith T.J."/>
            <person name="Spier E."/>
            <person name="Spradling A.C."/>
            <person name="Stapleton M."/>
            <person name="Strong R."/>
            <person name="Sun E."/>
            <person name="Svirskas R."/>
            <person name="Tector C."/>
            <person name="Turner R."/>
            <person name="Venter E."/>
            <person name="Wang A.H."/>
            <person name="Wang X."/>
            <person name="Wang Z.-Y."/>
            <person name="Wassarman D.A."/>
            <person name="Weinstock G.M."/>
            <person name="Weissenbach J."/>
            <person name="Williams S.M."/>
            <person name="Woodage T."/>
            <person name="Worley K.C."/>
            <person name="Wu D."/>
            <person name="Yang S."/>
            <person name="Yao Q.A."/>
            <person name="Ye J."/>
            <person name="Yeh R.-F."/>
            <person name="Zaveri J.S."/>
            <person name="Zhan M."/>
            <person name="Zhang G."/>
            <person name="Zhao Q."/>
            <person name="Zheng L."/>
            <person name="Zheng X.H."/>
            <person name="Zhong F.N."/>
            <person name="Zhong W."/>
            <person name="Zhou X."/>
            <person name="Zhu S.C."/>
            <person name="Zhu X."/>
            <person name="Smith H.O."/>
            <person name="Gibbs R.A."/>
            <person name="Myers E.W."/>
            <person name="Rubin G.M."/>
            <person name="Venter J.C."/>
        </authorList>
    </citation>
    <scope>NUCLEOTIDE SEQUENCE [LARGE SCALE GENOMIC DNA]</scope>
    <source>
        <strain evidence="2">Berkeley</strain>
    </source>
</reference>
<reference key="3">
    <citation type="journal article" date="2002" name="Genome Biol.">
        <title>Annotation of the Drosophila melanogaster euchromatic genome: a systematic review.</title>
        <authorList>
            <person name="Misra S."/>
            <person name="Crosby M.A."/>
            <person name="Mungall C.J."/>
            <person name="Matthews B.B."/>
            <person name="Campbell K.S."/>
            <person name="Hradecky P."/>
            <person name="Huang Y."/>
            <person name="Kaminker J.S."/>
            <person name="Millburn G.H."/>
            <person name="Prochnik S.E."/>
            <person name="Smith C.D."/>
            <person name="Tupy J.L."/>
            <person name="Whitfield E.J."/>
            <person name="Bayraktaroglu L."/>
            <person name="Berman B.P."/>
            <person name="Bettencourt B.R."/>
            <person name="Celniker S.E."/>
            <person name="de Grey A.D.N.J."/>
            <person name="Drysdale R.A."/>
            <person name="Harris N.L."/>
            <person name="Richter J."/>
            <person name="Russo S."/>
            <person name="Schroeder A.J."/>
            <person name="Shu S.Q."/>
            <person name="Stapleton M."/>
            <person name="Yamada C."/>
            <person name="Ashburner M."/>
            <person name="Gelbart W.M."/>
            <person name="Rubin G.M."/>
            <person name="Lewis S.E."/>
        </authorList>
    </citation>
    <scope>GENOME REANNOTATION</scope>
    <source>
        <strain>Berkeley</strain>
    </source>
</reference>
<reference evidence="6" key="4">
    <citation type="journal article" date="2000" name="Science">
        <title>From sequence to chromosome: the tip of the X chromosome of D. melanogaster.</title>
        <authorList>
            <person name="Benos P.V."/>
            <person name="Gatt M.K."/>
            <person name="Ashburner M."/>
            <person name="Murphy L."/>
            <person name="Harris D."/>
            <person name="Barrell B.G."/>
            <person name="Ferraz C."/>
            <person name="Vidal S."/>
            <person name="Brun C."/>
            <person name="Demailles J."/>
            <person name="Cadieu E."/>
            <person name="Dreano S."/>
            <person name="Gloux S."/>
            <person name="Lelaure V."/>
            <person name="Mottier S."/>
            <person name="Galibert F."/>
            <person name="Borkova D."/>
            <person name="Minana B."/>
            <person name="Kafatos F.C."/>
            <person name="Louis C."/>
            <person name="Siden-Kiamos I."/>
            <person name="Bolshakov S."/>
            <person name="Papagiannakis G."/>
            <person name="Spanos L."/>
            <person name="Cox S."/>
            <person name="Madueno E."/>
            <person name="de Pablos B."/>
            <person name="Modolell J."/>
            <person name="Peter A."/>
            <person name="Schoettler P."/>
            <person name="Werner M."/>
            <person name="Mourkioti F."/>
            <person name="Beinert N."/>
            <person name="Dowe G."/>
            <person name="Schaefer U."/>
            <person name="Jaeckle H."/>
            <person name="Bucheton A."/>
            <person name="Callister D.M."/>
            <person name="Campbell L.A."/>
            <person name="Darlamitsou A."/>
            <person name="Henderson N.S."/>
            <person name="McMillan P.J."/>
            <person name="Salles C."/>
            <person name="Tait E.A."/>
            <person name="Valenti P."/>
            <person name="Saunders R.D.C."/>
            <person name="Glover D.M."/>
        </authorList>
    </citation>
    <scope>NUCLEOTIDE SEQUENCE [LARGE SCALE GENOMIC DNA]</scope>
    <source>
        <strain evidence="3">Oregon-R</strain>
    </source>
</reference>
<reference key="5">
    <citation type="submission" date="2005-03" db="EMBL/GenBank/DDBJ databases">
        <authorList>
            <person name="Stapleton M."/>
            <person name="Carlson J.W."/>
            <person name="Chavez C."/>
            <person name="Frise E."/>
            <person name="George R.A."/>
            <person name="Pacleb J.M."/>
            <person name="Park S."/>
            <person name="Wan K.H."/>
            <person name="Yu C."/>
            <person name="Rubin G.M."/>
            <person name="Celniker S.E."/>
        </authorList>
    </citation>
    <scope>NUCLEOTIDE SEQUENCE [LARGE SCALE MRNA]</scope>
    <source>
        <strain>Berkeley</strain>
        <tissue>Embryo</tissue>
    </source>
</reference>
<reference evidence="6" key="6">
    <citation type="journal article" date="2002" name="Genome Biol.">
        <title>A Drosophila full-length cDNA resource.</title>
        <authorList>
            <person name="Stapleton M."/>
            <person name="Carlson J.W."/>
            <person name="Brokstein P."/>
            <person name="Yu C."/>
            <person name="Champe M."/>
            <person name="George R.A."/>
            <person name="Guarin H."/>
            <person name="Kronmiller B."/>
            <person name="Pacleb J.M."/>
            <person name="Park S."/>
            <person name="Wan K.H."/>
            <person name="Rubin G.M."/>
            <person name="Celniker S.E."/>
        </authorList>
    </citation>
    <scope>NUCLEOTIDE SEQUENCE [LARGE SCALE MRNA] OF 2-325</scope>
    <source>
        <strain evidence="4">Berkeley</strain>
        <tissue evidence="4">Embryo</tissue>
    </source>
</reference>
<comment type="function">
    <text evidence="5">Neurogenic protein essential for the development and maintenance of epithelial structure. Required in the germline for establishing the follicular epithelium and for determining the dorsal-ventral polarity. Collaborates with Notch on the apical surface of follicle cells to mediate germline-follicle cell adhesion. Brn has a role in chorion formation.</text>
</comment>
<comment type="catalytic activity">
    <reaction>
        <text>a ganglioside GM2 (d18:1(4E)) + UDP-alpha-D-galactose = a ganglioside GM1 (d18:1(4E)) + UDP + H(+)</text>
        <dbReference type="Rhea" id="RHEA:16773"/>
        <dbReference type="ChEBI" id="CHEBI:15378"/>
        <dbReference type="ChEBI" id="CHEBI:58223"/>
        <dbReference type="ChEBI" id="CHEBI:66914"/>
        <dbReference type="ChEBI" id="CHEBI:71502"/>
        <dbReference type="ChEBI" id="CHEBI:77709"/>
        <dbReference type="EC" id="2.4.1.62"/>
    </reaction>
</comment>
<comment type="subcellular location">
    <subcellularLocation>
        <location evidence="6">Golgi apparatus membrane</location>
        <topology evidence="6">Single-pass type II membrane protein</topology>
    </subcellularLocation>
</comment>
<comment type="similarity">
    <text evidence="6">Belongs to the glycosyltransferase 31 family.</text>
</comment>
<comment type="sequence caution" evidence="6">
    <conflict type="erroneous initiation">
        <sequence resource="EMBL-CDS" id="AAL48007"/>
    </conflict>
</comment>
<dbReference type="EC" id="2.4.1.62"/>
<dbReference type="EMBL" id="U41449">
    <property type="protein sequence ID" value="AAA85211.1"/>
    <property type="molecule type" value="mRNA"/>
</dbReference>
<dbReference type="EMBL" id="AE014298">
    <property type="protein sequence ID" value="AAF45918.1"/>
    <property type="molecule type" value="Genomic_DNA"/>
</dbReference>
<dbReference type="EMBL" id="AL033125">
    <property type="protein sequence ID" value="CAA21833.1"/>
    <property type="molecule type" value="Genomic_DNA"/>
</dbReference>
<dbReference type="EMBL" id="BT021250">
    <property type="protein sequence ID" value="AAX33398.1"/>
    <property type="molecule type" value="mRNA"/>
</dbReference>
<dbReference type="EMBL" id="AY070536">
    <property type="protein sequence ID" value="AAL48007.1"/>
    <property type="status" value="ALT_INIT"/>
    <property type="molecule type" value="mRNA"/>
</dbReference>
<dbReference type="RefSeq" id="NP_476901.1">
    <property type="nucleotide sequence ID" value="NM_057553.5"/>
</dbReference>
<dbReference type="SMR" id="Q24157"/>
<dbReference type="BioGRID" id="57876">
    <property type="interactions" value="2"/>
</dbReference>
<dbReference type="FunCoup" id="Q24157">
    <property type="interactions" value="152"/>
</dbReference>
<dbReference type="IntAct" id="Q24157">
    <property type="interactions" value="2"/>
</dbReference>
<dbReference type="STRING" id="7227.FBpp0070606"/>
<dbReference type="CAZy" id="GT31">
    <property type="family name" value="Glycosyltransferase Family 31"/>
</dbReference>
<dbReference type="GlyCosmos" id="Q24157">
    <property type="glycosylation" value="2 sites, No reported glycans"/>
</dbReference>
<dbReference type="GlyGen" id="Q24157">
    <property type="glycosylation" value="3 sites"/>
</dbReference>
<dbReference type="PaxDb" id="7227-FBpp0070606"/>
<dbReference type="DNASU" id="31358"/>
<dbReference type="EnsemblMetazoa" id="FBtr0070638">
    <property type="protein sequence ID" value="FBpp0070606"/>
    <property type="gene ID" value="FBgn0000221"/>
</dbReference>
<dbReference type="GeneID" id="31358"/>
<dbReference type="KEGG" id="dme:Dmel_CG4934"/>
<dbReference type="AGR" id="FB:FBgn0000221"/>
<dbReference type="CTD" id="31358"/>
<dbReference type="FlyBase" id="FBgn0000221">
    <property type="gene designation" value="brn"/>
</dbReference>
<dbReference type="VEuPathDB" id="VectorBase:FBgn0000221"/>
<dbReference type="eggNOG" id="KOG2287">
    <property type="taxonomic scope" value="Eukaryota"/>
</dbReference>
<dbReference type="GeneTree" id="ENSGT00940000173583"/>
<dbReference type="HOGENOM" id="CLU_036849_2_2_1"/>
<dbReference type="InParanoid" id="Q24157"/>
<dbReference type="OMA" id="RVWNECR"/>
<dbReference type="OrthoDB" id="5957813at2759"/>
<dbReference type="PhylomeDB" id="Q24157"/>
<dbReference type="BRENDA" id="2.4.1.62">
    <property type="organism ID" value="1994"/>
</dbReference>
<dbReference type="SignaLink" id="Q24157"/>
<dbReference type="BioGRID-ORCS" id="31358">
    <property type="hits" value="0 hits in 3 CRISPR screens"/>
</dbReference>
<dbReference type="GenomeRNAi" id="31358"/>
<dbReference type="PRO" id="PR:Q24157"/>
<dbReference type="Proteomes" id="UP000000803">
    <property type="component" value="Chromosome X"/>
</dbReference>
<dbReference type="Bgee" id="FBgn0000221">
    <property type="expression patterns" value="Expressed in mid-late elongation-stage spermatid (Drosophila) in testis and 35 other cell types or tissues"/>
</dbReference>
<dbReference type="GO" id="GO:0000139">
    <property type="term" value="C:Golgi membrane"/>
    <property type="evidence" value="ECO:0000318"/>
    <property type="project" value="GO_Central"/>
</dbReference>
<dbReference type="GO" id="GO:0005795">
    <property type="term" value="C:Golgi stack"/>
    <property type="evidence" value="ECO:0000250"/>
    <property type="project" value="UniProtKB"/>
</dbReference>
<dbReference type="GO" id="GO:0046981">
    <property type="term" value="F:beta-1,4-mannosylglycolipid beta-1,3-N-acetylglucosaminyltransferase activity"/>
    <property type="evidence" value="ECO:0000314"/>
    <property type="project" value="FlyBase"/>
</dbReference>
<dbReference type="GO" id="GO:0047915">
    <property type="term" value="F:ganglioside galactosyltransferase activity"/>
    <property type="evidence" value="ECO:0007669"/>
    <property type="project" value="UniProtKB-EC"/>
</dbReference>
<dbReference type="GO" id="GO:0008194">
    <property type="term" value="F:UDP-glycosyltransferase activity"/>
    <property type="evidence" value="ECO:0000318"/>
    <property type="project" value="GO_Central"/>
</dbReference>
<dbReference type="GO" id="GO:0007298">
    <property type="term" value="P:border follicle cell migration"/>
    <property type="evidence" value="ECO:0000315"/>
    <property type="project" value="FlyBase"/>
</dbReference>
<dbReference type="GO" id="GO:0030707">
    <property type="term" value="P:follicle cell of egg chamber development"/>
    <property type="evidence" value="ECO:0000315"/>
    <property type="project" value="FlyBase"/>
</dbReference>
<dbReference type="GO" id="GO:0007299">
    <property type="term" value="P:follicle cell of egg chamber-cell adhesion"/>
    <property type="evidence" value="ECO:0000315"/>
    <property type="project" value="FlyBase"/>
</dbReference>
<dbReference type="GO" id="GO:0007293">
    <property type="term" value="P:germarium-derived egg chamber formation"/>
    <property type="evidence" value="ECO:0000315"/>
    <property type="project" value="FlyBase"/>
</dbReference>
<dbReference type="GO" id="GO:0006688">
    <property type="term" value="P:glycosphingolipid biosynthetic process"/>
    <property type="evidence" value="ECO:0000314"/>
    <property type="project" value="FlyBase"/>
</dbReference>
<dbReference type="GO" id="GO:0001744">
    <property type="term" value="P:insect visual primordium formation"/>
    <property type="evidence" value="ECO:0000315"/>
    <property type="project" value="FlyBase"/>
</dbReference>
<dbReference type="GO" id="GO:0042248">
    <property type="term" value="P:maintenance of polarity of follicular epithelium"/>
    <property type="evidence" value="ECO:0000315"/>
    <property type="project" value="FlyBase"/>
</dbReference>
<dbReference type="GO" id="GO:0016333">
    <property type="term" value="P:morphogenesis of follicular epithelium"/>
    <property type="evidence" value="ECO:0000315"/>
    <property type="project" value="FlyBase"/>
</dbReference>
<dbReference type="GO" id="GO:0007219">
    <property type="term" value="P:Notch signaling pathway"/>
    <property type="evidence" value="ECO:0007669"/>
    <property type="project" value="UniProtKB-KW"/>
</dbReference>
<dbReference type="GO" id="GO:0006493">
    <property type="term" value="P:protein O-linked glycosylation"/>
    <property type="evidence" value="ECO:0000318"/>
    <property type="project" value="GO_Central"/>
</dbReference>
<dbReference type="FunFam" id="3.90.550.50:FF:000042">
    <property type="entry name" value="Hexosyltransferase"/>
    <property type="match status" value="1"/>
</dbReference>
<dbReference type="Gene3D" id="3.90.550.50">
    <property type="match status" value="1"/>
</dbReference>
<dbReference type="InterPro" id="IPR002659">
    <property type="entry name" value="Glyco_trans_31"/>
</dbReference>
<dbReference type="InterPro" id="IPR029044">
    <property type="entry name" value="Nucleotide-diphossugar_trans"/>
</dbReference>
<dbReference type="PANTHER" id="PTHR11214:SF349">
    <property type="entry name" value="BETA-1,3-GALACTOSYLTRANSFERASE BRN"/>
    <property type="match status" value="1"/>
</dbReference>
<dbReference type="PANTHER" id="PTHR11214">
    <property type="entry name" value="BETA-1,3-N-ACETYLGLUCOSAMINYLTRANSFERASE"/>
    <property type="match status" value="1"/>
</dbReference>
<dbReference type="Pfam" id="PF01762">
    <property type="entry name" value="Galactosyl_T"/>
    <property type="match status" value="1"/>
</dbReference>
<dbReference type="SUPFAM" id="SSF53448">
    <property type="entry name" value="Nucleotide-diphospho-sugar transferases"/>
    <property type="match status" value="1"/>
</dbReference>
<protein>
    <recommendedName>
        <fullName>Beta-1,3-galactosyltransferase brn</fullName>
        <ecNumber>2.4.1.62</ecNumber>
    </recommendedName>
    <alternativeName>
        <fullName>Brainiac protein</fullName>
    </alternativeName>
    <alternativeName>
        <fullName>Neurogenic secreted-signaling protein brn</fullName>
    </alternativeName>
</protein>
<evidence type="ECO:0000255" key="1"/>
<evidence type="ECO:0000269" key="2">
    <source>
    </source>
</evidence>
<evidence type="ECO:0000269" key="3">
    <source>
    </source>
</evidence>
<evidence type="ECO:0000269" key="4">
    <source>
    </source>
</evidence>
<evidence type="ECO:0000269" key="5">
    <source>
    </source>
</evidence>
<evidence type="ECO:0000305" key="6"/>
<evidence type="ECO:0000312" key="7">
    <source>
        <dbReference type="EMBL" id="AAL48007.1"/>
    </source>
</evidence>
<proteinExistence type="evidence at transcript level"/>
<gene>
    <name type="primary">brn</name>
    <name type="ORF">CG4934</name>
</gene>
<feature type="chain" id="PRO_0000219174" description="Beta-1,3-galactosyltransferase brn">
    <location>
        <begin position="1"/>
        <end position="325"/>
    </location>
</feature>
<feature type="topological domain" description="Cytoplasmic" evidence="1">
    <location>
        <begin position="1"/>
        <end position="7"/>
    </location>
</feature>
<feature type="transmembrane region" description="Helical; Signal-anchor for type II membrane protein" evidence="1">
    <location>
        <begin position="8"/>
        <end position="28"/>
    </location>
</feature>
<feature type="topological domain" description="Lumenal" evidence="1">
    <location>
        <begin position="29"/>
        <end position="325"/>
    </location>
</feature>
<feature type="glycosylation site" description="N-linked (GlcNAc...) asparagine" evidence="1">
    <location>
        <position position="149"/>
    </location>
</feature>
<feature type="glycosylation site" description="N-linked (GlcNAc...) asparagine" evidence="1">
    <location>
        <position position="166"/>
    </location>
</feature>
<feature type="sequence conflict" description="In Ref. 1; AAA85211." evidence="6" ref="1">
    <original>E</original>
    <variation>D</variation>
    <location>
        <position position="142"/>
    </location>
</feature>
<feature type="sequence conflict" description="In Ref. 1; AAA85211." evidence="6" ref="1">
    <original>D</original>
    <variation>E</variation>
    <location>
        <position position="163"/>
    </location>
</feature>
<sequence>MQSKHRKLLLRCLLVLPLILLVDYCGLLTHLHELNFERHFHYPLNDDTGSGSASSGLDKFAYLRVPSFTAEVPVDQPARLTMLIKSAVGNSRRREAIRRTWGYEGRFSDVHLRRVFLLGTAEDSEKDVAWESREHGDILQAEFTDAYFNNTLKTMLGMRWASDQFNRSEFYLFVDDDYYVSAKNVLKFLGRGRQSHQPELLFAGHVFQTSPLRHKFSKWYVSLEEYPFDRWPPYVTAGAFILSQKALRQLYAASVHLPLFRFDDVYLGIVALKAGISLQHCDDFRFHRPAYKGPDSYSSVIASHEFGDPEEMTRVWNECRSANYA</sequence>
<accession>Q24157</accession>
<accession>Q5BIH4</accession>
<accession>Q8SZS9</accession>
<accession>Q9W4N0</accession>
<name>BRN_DROME</name>
<keyword id="KW-0217">Developmental protein</keyword>
<keyword id="KW-0325">Glycoprotein</keyword>
<keyword id="KW-0328">Glycosyltransferase</keyword>
<keyword id="KW-0333">Golgi apparatus</keyword>
<keyword id="KW-0472">Membrane</keyword>
<keyword id="KW-0914">Notch signaling pathway</keyword>
<keyword id="KW-1185">Reference proteome</keyword>
<keyword id="KW-0735">Signal-anchor</keyword>
<keyword id="KW-0808">Transferase</keyword>
<keyword id="KW-0812">Transmembrane</keyword>
<keyword id="KW-1133">Transmembrane helix</keyword>
<organism evidence="7">
    <name type="scientific">Drosophila melanogaster</name>
    <name type="common">Fruit fly</name>
    <dbReference type="NCBI Taxonomy" id="7227"/>
    <lineage>
        <taxon>Eukaryota</taxon>
        <taxon>Metazoa</taxon>
        <taxon>Ecdysozoa</taxon>
        <taxon>Arthropoda</taxon>
        <taxon>Hexapoda</taxon>
        <taxon>Insecta</taxon>
        <taxon>Pterygota</taxon>
        <taxon>Neoptera</taxon>
        <taxon>Endopterygota</taxon>
        <taxon>Diptera</taxon>
        <taxon>Brachycera</taxon>
        <taxon>Muscomorpha</taxon>
        <taxon>Ephydroidea</taxon>
        <taxon>Drosophilidae</taxon>
        <taxon>Drosophila</taxon>
        <taxon>Sophophora</taxon>
    </lineage>
</organism>